<dbReference type="EC" id="2.7.1.-"/>
<dbReference type="EMBL" id="DS027686">
    <property type="protein sequence ID" value="EAW23889.1"/>
    <property type="molecule type" value="Genomic_DNA"/>
</dbReference>
<dbReference type="RefSeq" id="XP_001265786.1">
    <property type="nucleotide sequence ID" value="XM_001265785.1"/>
</dbReference>
<dbReference type="SMR" id="A1CYR9"/>
<dbReference type="STRING" id="331117.A1CYR9"/>
<dbReference type="EnsemblFungi" id="EAW23889">
    <property type="protein sequence ID" value="EAW23889"/>
    <property type="gene ID" value="NFIA_034570"/>
</dbReference>
<dbReference type="GeneID" id="4592867"/>
<dbReference type="KEGG" id="nfi:NFIA_034570"/>
<dbReference type="VEuPathDB" id="FungiDB:NFIA_034570"/>
<dbReference type="eggNOG" id="KOG2750">
    <property type="taxonomic scope" value="Eukaryota"/>
</dbReference>
<dbReference type="HOGENOM" id="CLU_010345_1_2_1"/>
<dbReference type="OMA" id="PEFAPMG"/>
<dbReference type="OrthoDB" id="4054781at2759"/>
<dbReference type="Proteomes" id="UP000006702">
    <property type="component" value="Unassembled WGS sequence"/>
</dbReference>
<dbReference type="GO" id="GO:0005730">
    <property type="term" value="C:nucleolus"/>
    <property type="evidence" value="ECO:0007669"/>
    <property type="project" value="UniProtKB-SubCell"/>
</dbReference>
<dbReference type="GO" id="GO:0005524">
    <property type="term" value="F:ATP binding"/>
    <property type="evidence" value="ECO:0007669"/>
    <property type="project" value="UniProtKB-KW"/>
</dbReference>
<dbReference type="GO" id="GO:0051731">
    <property type="term" value="F:polynucleotide 5'-hydroxyl-kinase activity"/>
    <property type="evidence" value="ECO:0000250"/>
    <property type="project" value="UniProtKB"/>
</dbReference>
<dbReference type="GO" id="GO:0000448">
    <property type="term" value="P:cleavage in ITS2 between 5.8S rRNA and LSU-rRNA of tricistronic rRNA transcript (SSU-rRNA, 5.8S rRNA, LSU-rRNA)"/>
    <property type="evidence" value="ECO:0007669"/>
    <property type="project" value="TreeGrafter"/>
</dbReference>
<dbReference type="GO" id="GO:0006364">
    <property type="term" value="P:rRNA processing"/>
    <property type="evidence" value="ECO:0000250"/>
    <property type="project" value="UniProtKB"/>
</dbReference>
<dbReference type="FunFam" id="3.40.50.300:FF:001156">
    <property type="entry name" value="Polynucleotide 5-hydroxyl-kinase grc3"/>
    <property type="match status" value="1"/>
</dbReference>
<dbReference type="Gene3D" id="3.40.50.300">
    <property type="entry name" value="P-loop containing nucleotide triphosphate hydrolases"/>
    <property type="match status" value="1"/>
</dbReference>
<dbReference type="InterPro" id="IPR045116">
    <property type="entry name" value="Clp1/Grc3"/>
</dbReference>
<dbReference type="InterPro" id="IPR032319">
    <property type="entry name" value="CLP1_P"/>
</dbReference>
<dbReference type="InterPro" id="IPR027417">
    <property type="entry name" value="P-loop_NTPase"/>
</dbReference>
<dbReference type="PANTHER" id="PTHR12755">
    <property type="entry name" value="CLEAVAGE/POLYADENYLATION FACTOR IA SUBUNIT CLP1P"/>
    <property type="match status" value="1"/>
</dbReference>
<dbReference type="PANTHER" id="PTHR12755:SF3">
    <property type="entry name" value="POLYNUCLEOTIDE 5'-HYDROXYL-KINASE NOL9"/>
    <property type="match status" value="1"/>
</dbReference>
<dbReference type="Pfam" id="PF16575">
    <property type="entry name" value="CLP1_P"/>
    <property type="match status" value="1"/>
</dbReference>
<name>GRC3_NEOFI</name>
<reference key="1">
    <citation type="journal article" date="2008" name="PLoS Genet.">
        <title>Genomic islands in the pathogenic filamentous fungus Aspergillus fumigatus.</title>
        <authorList>
            <person name="Fedorova N.D."/>
            <person name="Khaldi N."/>
            <person name="Joardar V.S."/>
            <person name="Maiti R."/>
            <person name="Amedeo P."/>
            <person name="Anderson M.J."/>
            <person name="Crabtree J."/>
            <person name="Silva J.C."/>
            <person name="Badger J.H."/>
            <person name="Albarraq A."/>
            <person name="Angiuoli S."/>
            <person name="Bussey H."/>
            <person name="Bowyer P."/>
            <person name="Cotty P.J."/>
            <person name="Dyer P.S."/>
            <person name="Egan A."/>
            <person name="Galens K."/>
            <person name="Fraser-Liggett C.M."/>
            <person name="Haas B.J."/>
            <person name="Inman J.M."/>
            <person name="Kent R."/>
            <person name="Lemieux S."/>
            <person name="Malavazi I."/>
            <person name="Orvis J."/>
            <person name="Roemer T."/>
            <person name="Ronning C.M."/>
            <person name="Sundaram J.P."/>
            <person name="Sutton G."/>
            <person name="Turner G."/>
            <person name="Venter J.C."/>
            <person name="White O.R."/>
            <person name="Whitty B.R."/>
            <person name="Youngman P."/>
            <person name="Wolfe K.H."/>
            <person name="Goldman G.H."/>
            <person name="Wortman J.R."/>
            <person name="Jiang B."/>
            <person name="Denning D.W."/>
            <person name="Nierman W.C."/>
        </authorList>
    </citation>
    <scope>NUCLEOTIDE SEQUENCE [LARGE SCALE GENOMIC DNA]</scope>
    <source>
        <strain>ATCC 1020 / DSM 3700 / CBS 544.65 / FGSC A1164 / JCM 1740 / NRRL 181 / WB 181</strain>
    </source>
</reference>
<feature type="chain" id="PRO_0000289956" description="Polynucleotide 5'-hydroxyl-kinase grc3">
    <location>
        <begin position="1"/>
        <end position="835"/>
    </location>
</feature>
<feature type="region of interest" description="Disordered" evidence="3">
    <location>
        <begin position="1"/>
        <end position="132"/>
    </location>
</feature>
<feature type="region of interest" description="Disordered" evidence="3">
    <location>
        <begin position="608"/>
        <end position="658"/>
    </location>
</feature>
<feature type="region of interest" description="Disordered" evidence="3">
    <location>
        <begin position="758"/>
        <end position="777"/>
    </location>
</feature>
<feature type="compositionally biased region" description="Low complexity" evidence="3">
    <location>
        <begin position="91"/>
        <end position="105"/>
    </location>
</feature>
<feature type="compositionally biased region" description="Acidic residues" evidence="3">
    <location>
        <begin position="114"/>
        <end position="127"/>
    </location>
</feature>
<feature type="compositionally biased region" description="Polar residues" evidence="3">
    <location>
        <begin position="649"/>
        <end position="658"/>
    </location>
</feature>
<feature type="compositionally biased region" description="Basic and acidic residues" evidence="3">
    <location>
        <begin position="758"/>
        <end position="772"/>
    </location>
</feature>
<feature type="binding site" evidence="2">
    <location>
        <begin position="332"/>
        <end position="339"/>
    </location>
    <ligand>
        <name>ATP</name>
        <dbReference type="ChEBI" id="CHEBI:30616"/>
    </ligand>
</feature>
<protein>
    <recommendedName>
        <fullName>Polynucleotide 5'-hydroxyl-kinase grc3</fullName>
        <ecNumber>2.7.1.-</ecNumber>
    </recommendedName>
</protein>
<organism>
    <name type="scientific">Neosartorya fischeri (strain ATCC 1020 / DSM 3700 / CBS 544.65 / FGSC A1164 / JCM 1740 / NRRL 181 / WB 181)</name>
    <name type="common">Aspergillus fischerianus</name>
    <dbReference type="NCBI Taxonomy" id="331117"/>
    <lineage>
        <taxon>Eukaryota</taxon>
        <taxon>Fungi</taxon>
        <taxon>Dikarya</taxon>
        <taxon>Ascomycota</taxon>
        <taxon>Pezizomycotina</taxon>
        <taxon>Eurotiomycetes</taxon>
        <taxon>Eurotiomycetidae</taxon>
        <taxon>Eurotiales</taxon>
        <taxon>Aspergillaceae</taxon>
        <taxon>Aspergillus</taxon>
        <taxon>Aspergillus subgen. Fumigati</taxon>
    </lineage>
</organism>
<keyword id="KW-0067">ATP-binding</keyword>
<keyword id="KW-0418">Kinase</keyword>
<keyword id="KW-0547">Nucleotide-binding</keyword>
<keyword id="KW-0539">Nucleus</keyword>
<keyword id="KW-1185">Reference proteome</keyword>
<keyword id="KW-0698">rRNA processing</keyword>
<keyword id="KW-0808">Transferase</keyword>
<evidence type="ECO:0000250" key="1"/>
<evidence type="ECO:0000255" key="2"/>
<evidence type="ECO:0000256" key="3">
    <source>
        <dbReference type="SAM" id="MobiDB-lite"/>
    </source>
</evidence>
<evidence type="ECO:0000305" key="4"/>
<proteinExistence type="inferred from homology"/>
<gene>
    <name type="primary">grc3</name>
    <name type="ORF">NFIA_034570</name>
</gene>
<accession>A1CYR9</accession>
<sequence length="835" mass="91733">MKRKAEKQQATAPVSAFAARKARQQQAQLVEPEKTAQNEPAVEPPSKRARWSPEEGAARQAANGNDRVQTRRSTRRKAETLSSELAEKQPQRSAAAARAQIAERTPAPEKGDAETSDAAEEEEEDILERENGVGVIAAEDDAEGYESPADDVPQVQNFPLSKTRLNKSNIVFSDERTLCVRIKEKMTLVLLGHYDLWVKRGVISLMGAKLHPSPRLYRVYAPSTHSLPVIKCVAGVDGEAEIEVKSCNSGIYRLRHLSPLYQRIWNGKNTAADKLTLKKASASTKRTFSVLYTSSDDSWNRHLRPLHLEKQWSSAIRSLSQRGGRLKVLICGPKASGKSTFSRYLLNHLLSPAPQTENNHRNTDGVAFLDLDPGQPEFSPMGQVYLAHLRSPFFGPPFTHPSLAESQDGSIIRSHHIGVTSPKEDPDHYVLAAMDLMDRYRALLASYPQCPLIINYPGWIFGLGLEVATWLVKSLGLSDVVYMSEKGPAEVVEPLGHAAQEARVPLTTLPSQPTDFVSRSSAQLRSMQVQSYFHMSHPSEIHNPQWLDTTMSRSRPLVVDYAGPRQGIRGIMVMGSQISPDLLHEALDGALVGVVAVESPNAIMGQADTAGFSGSSQRDATQGAEDLSGAASDVDMNDVTDASHGDVAPTSSSSVESMITRTPNEDLPYLFVGSGSCNPLDPKASNCLGLALVRSIDVPSRKLELITPIPGSKLRDALEQGHGIVLVRGMLDNPSWAISEDYYAARAAEKHHQELVAKARKETDTRDGRDAAGDADTQGMVSALLRDRIRRASNVPWMTVIEDNSRRHREAAQREKSLWKLRKKAYPGSESETDW</sequence>
<comment type="function">
    <text evidence="1">Polynucleotide 5'-kinase involved in rRNA processing.</text>
</comment>
<comment type="subcellular location">
    <subcellularLocation>
        <location evidence="1">Nucleus</location>
        <location evidence="1">Nucleolus</location>
    </subcellularLocation>
</comment>
<comment type="similarity">
    <text evidence="4">Belongs to the Clp1 family. NOL9/GRC3 subfamily.</text>
</comment>